<organism>
    <name type="scientific">Burkholderia cenocepacia (strain HI2424)</name>
    <dbReference type="NCBI Taxonomy" id="331272"/>
    <lineage>
        <taxon>Bacteria</taxon>
        <taxon>Pseudomonadati</taxon>
        <taxon>Pseudomonadota</taxon>
        <taxon>Betaproteobacteria</taxon>
        <taxon>Burkholderiales</taxon>
        <taxon>Burkholderiaceae</taxon>
        <taxon>Burkholderia</taxon>
        <taxon>Burkholderia cepacia complex</taxon>
    </lineage>
</organism>
<gene>
    <name evidence="1" type="primary">htpX</name>
    <name type="ordered locus">Bcen2424_3124</name>
</gene>
<feature type="chain" id="PRO_1000077449" description="Protease HtpX homolog">
    <location>
        <begin position="1"/>
        <end position="285"/>
    </location>
</feature>
<feature type="transmembrane region" description="Helical" evidence="1">
    <location>
        <begin position="7"/>
        <end position="27"/>
    </location>
</feature>
<feature type="transmembrane region" description="Helical" evidence="1">
    <location>
        <begin position="30"/>
        <end position="50"/>
    </location>
</feature>
<feature type="transmembrane region" description="Helical" evidence="1">
    <location>
        <begin position="146"/>
        <end position="166"/>
    </location>
</feature>
<feature type="transmembrane region" description="Helical" evidence="1">
    <location>
        <begin position="177"/>
        <end position="197"/>
    </location>
</feature>
<feature type="active site" evidence="1">
    <location>
        <position position="132"/>
    </location>
</feature>
<feature type="binding site" evidence="1">
    <location>
        <position position="131"/>
    </location>
    <ligand>
        <name>Zn(2+)</name>
        <dbReference type="ChEBI" id="CHEBI:29105"/>
        <note>catalytic</note>
    </ligand>
</feature>
<feature type="binding site" evidence="1">
    <location>
        <position position="135"/>
    </location>
    <ligand>
        <name>Zn(2+)</name>
        <dbReference type="ChEBI" id="CHEBI:29105"/>
        <note>catalytic</note>
    </ligand>
</feature>
<feature type="binding site" evidence="1">
    <location>
        <position position="202"/>
    </location>
    <ligand>
        <name>Zn(2+)</name>
        <dbReference type="ChEBI" id="CHEBI:29105"/>
        <note>catalytic</note>
    </ligand>
</feature>
<proteinExistence type="inferred from homology"/>
<reference key="1">
    <citation type="submission" date="2006-08" db="EMBL/GenBank/DDBJ databases">
        <title>Complete sequence of chromosome 1 of Burkholderia cenocepacia HI2424.</title>
        <authorList>
            <person name="Copeland A."/>
            <person name="Lucas S."/>
            <person name="Lapidus A."/>
            <person name="Barry K."/>
            <person name="Detter J.C."/>
            <person name="Glavina del Rio T."/>
            <person name="Hammon N."/>
            <person name="Israni S."/>
            <person name="Pitluck S."/>
            <person name="Chain P."/>
            <person name="Malfatti S."/>
            <person name="Shin M."/>
            <person name="Vergez L."/>
            <person name="Schmutz J."/>
            <person name="Larimer F."/>
            <person name="Land M."/>
            <person name="Hauser L."/>
            <person name="Kyrpides N."/>
            <person name="Kim E."/>
            <person name="LiPuma J.J."/>
            <person name="Gonzalez C.F."/>
            <person name="Konstantinidis K."/>
            <person name="Tiedje J.M."/>
            <person name="Richardson P."/>
        </authorList>
    </citation>
    <scope>NUCLEOTIDE SEQUENCE [LARGE SCALE GENOMIC DNA]</scope>
    <source>
        <strain>HI2424</strain>
    </source>
</reference>
<name>HTPX_BURCH</name>
<sequence>MFNWVKTAMLMAAITALFIVIGGMIGGSRGMTIALLFALGMNFFSYWFSDKMVLRMYNAQEVDENTAPQFYRMVRELATRANLPMPRVYLINEDAPNAFATGRNPEHAAVAATTGILRVLSEREMRGVMAHELAHVKHRDILISTITATMAGAISALANFAMFFGGRDENGRPANPIAGIAVALLAPIAGALIQMAISRAREFEADRGGAQISGDPQSLATALDKIHRYAAGIPFQAAEAHPATAQMMIMNPLHGGGLQNLFSTHPATEERIARLMEMARTGRFE</sequence>
<protein>
    <recommendedName>
        <fullName evidence="1">Protease HtpX homolog</fullName>
        <ecNumber evidence="1">3.4.24.-</ecNumber>
    </recommendedName>
</protein>
<evidence type="ECO:0000255" key="1">
    <source>
        <dbReference type="HAMAP-Rule" id="MF_00188"/>
    </source>
</evidence>
<accession>A0KBJ5</accession>
<dbReference type="EC" id="3.4.24.-" evidence="1"/>
<dbReference type="EMBL" id="CP000458">
    <property type="protein sequence ID" value="ABK09872.1"/>
    <property type="molecule type" value="Genomic_DNA"/>
</dbReference>
<dbReference type="RefSeq" id="WP_011546484.1">
    <property type="nucleotide sequence ID" value="NC_008542.1"/>
</dbReference>
<dbReference type="SMR" id="A0KBJ5"/>
<dbReference type="GeneID" id="83049922"/>
<dbReference type="KEGG" id="bch:Bcen2424_3124"/>
<dbReference type="HOGENOM" id="CLU_042266_3_0_4"/>
<dbReference type="GO" id="GO:0005886">
    <property type="term" value="C:plasma membrane"/>
    <property type="evidence" value="ECO:0007669"/>
    <property type="project" value="UniProtKB-SubCell"/>
</dbReference>
<dbReference type="GO" id="GO:0004222">
    <property type="term" value="F:metalloendopeptidase activity"/>
    <property type="evidence" value="ECO:0007669"/>
    <property type="project" value="UniProtKB-UniRule"/>
</dbReference>
<dbReference type="GO" id="GO:0008270">
    <property type="term" value="F:zinc ion binding"/>
    <property type="evidence" value="ECO:0007669"/>
    <property type="project" value="UniProtKB-UniRule"/>
</dbReference>
<dbReference type="GO" id="GO:0006508">
    <property type="term" value="P:proteolysis"/>
    <property type="evidence" value="ECO:0007669"/>
    <property type="project" value="UniProtKB-KW"/>
</dbReference>
<dbReference type="CDD" id="cd07336">
    <property type="entry name" value="M48B_HtpX_like"/>
    <property type="match status" value="1"/>
</dbReference>
<dbReference type="Gene3D" id="3.30.2010.10">
    <property type="entry name" value="Metalloproteases ('zincins'), catalytic domain"/>
    <property type="match status" value="1"/>
</dbReference>
<dbReference type="HAMAP" id="MF_00188">
    <property type="entry name" value="Pept_M48_protease_HtpX"/>
    <property type="match status" value="1"/>
</dbReference>
<dbReference type="InterPro" id="IPR050083">
    <property type="entry name" value="HtpX_protease"/>
</dbReference>
<dbReference type="InterPro" id="IPR022919">
    <property type="entry name" value="Pept_M48_protease_HtpX"/>
</dbReference>
<dbReference type="InterPro" id="IPR001915">
    <property type="entry name" value="Peptidase_M48"/>
</dbReference>
<dbReference type="NCBIfam" id="NF002363">
    <property type="entry name" value="PRK01345.1"/>
    <property type="match status" value="1"/>
</dbReference>
<dbReference type="NCBIfam" id="NF002826">
    <property type="entry name" value="PRK03001.1"/>
    <property type="match status" value="1"/>
</dbReference>
<dbReference type="PANTHER" id="PTHR43221">
    <property type="entry name" value="PROTEASE HTPX"/>
    <property type="match status" value="1"/>
</dbReference>
<dbReference type="PANTHER" id="PTHR43221:SF1">
    <property type="entry name" value="PROTEASE HTPX"/>
    <property type="match status" value="1"/>
</dbReference>
<dbReference type="Pfam" id="PF01435">
    <property type="entry name" value="Peptidase_M48"/>
    <property type="match status" value="1"/>
</dbReference>
<keyword id="KW-0997">Cell inner membrane</keyword>
<keyword id="KW-1003">Cell membrane</keyword>
<keyword id="KW-0378">Hydrolase</keyword>
<keyword id="KW-0472">Membrane</keyword>
<keyword id="KW-0479">Metal-binding</keyword>
<keyword id="KW-0482">Metalloprotease</keyword>
<keyword id="KW-0645">Protease</keyword>
<keyword id="KW-0812">Transmembrane</keyword>
<keyword id="KW-1133">Transmembrane helix</keyword>
<keyword id="KW-0862">Zinc</keyword>
<comment type="cofactor">
    <cofactor evidence="1">
        <name>Zn(2+)</name>
        <dbReference type="ChEBI" id="CHEBI:29105"/>
    </cofactor>
    <text evidence="1">Binds 1 zinc ion per subunit.</text>
</comment>
<comment type="subcellular location">
    <subcellularLocation>
        <location evidence="1">Cell inner membrane</location>
        <topology evidence="1">Multi-pass membrane protein</topology>
    </subcellularLocation>
</comment>
<comment type="similarity">
    <text evidence="1">Belongs to the peptidase M48B family.</text>
</comment>